<dbReference type="EMBL" id="CP000036">
    <property type="protein sequence ID" value="ABB67787.1"/>
    <property type="molecule type" value="Genomic_DNA"/>
</dbReference>
<dbReference type="RefSeq" id="WP_000091945.1">
    <property type="nucleotide sequence ID" value="NC_007613.1"/>
</dbReference>
<dbReference type="SMR" id="Q31VX1"/>
<dbReference type="GeneID" id="86948169"/>
<dbReference type="KEGG" id="sbo:SBO_3299"/>
<dbReference type="HOGENOM" id="CLU_065464_1_2_6"/>
<dbReference type="Proteomes" id="UP000007067">
    <property type="component" value="Chromosome"/>
</dbReference>
<dbReference type="GO" id="GO:0022625">
    <property type="term" value="C:cytosolic large ribosomal subunit"/>
    <property type="evidence" value="ECO:0007669"/>
    <property type="project" value="TreeGrafter"/>
</dbReference>
<dbReference type="GO" id="GO:0019843">
    <property type="term" value="F:rRNA binding"/>
    <property type="evidence" value="ECO:0007669"/>
    <property type="project" value="UniProtKB-UniRule"/>
</dbReference>
<dbReference type="GO" id="GO:0003735">
    <property type="term" value="F:structural constituent of ribosome"/>
    <property type="evidence" value="ECO:0007669"/>
    <property type="project" value="InterPro"/>
</dbReference>
<dbReference type="GO" id="GO:0002181">
    <property type="term" value="P:cytoplasmic translation"/>
    <property type="evidence" value="ECO:0007669"/>
    <property type="project" value="TreeGrafter"/>
</dbReference>
<dbReference type="FunFam" id="3.90.930.12:FF:000001">
    <property type="entry name" value="50S ribosomal protein L6"/>
    <property type="match status" value="1"/>
</dbReference>
<dbReference type="FunFam" id="3.90.930.12:FF:000002">
    <property type="entry name" value="50S ribosomal protein L6"/>
    <property type="match status" value="1"/>
</dbReference>
<dbReference type="Gene3D" id="3.90.930.12">
    <property type="entry name" value="Ribosomal protein L6, alpha-beta domain"/>
    <property type="match status" value="2"/>
</dbReference>
<dbReference type="HAMAP" id="MF_01365_B">
    <property type="entry name" value="Ribosomal_uL6_B"/>
    <property type="match status" value="1"/>
</dbReference>
<dbReference type="InterPro" id="IPR000702">
    <property type="entry name" value="Ribosomal_uL6-like"/>
</dbReference>
<dbReference type="InterPro" id="IPR036789">
    <property type="entry name" value="Ribosomal_uL6-like_a/b-dom_sf"/>
</dbReference>
<dbReference type="InterPro" id="IPR020040">
    <property type="entry name" value="Ribosomal_uL6_a/b-dom"/>
</dbReference>
<dbReference type="InterPro" id="IPR019906">
    <property type="entry name" value="Ribosomal_uL6_bac-type"/>
</dbReference>
<dbReference type="InterPro" id="IPR002358">
    <property type="entry name" value="Ribosomal_uL6_CS"/>
</dbReference>
<dbReference type="NCBIfam" id="TIGR03654">
    <property type="entry name" value="L6_bact"/>
    <property type="match status" value="1"/>
</dbReference>
<dbReference type="PANTHER" id="PTHR11655">
    <property type="entry name" value="60S/50S RIBOSOMAL PROTEIN L6/L9"/>
    <property type="match status" value="1"/>
</dbReference>
<dbReference type="PANTHER" id="PTHR11655:SF14">
    <property type="entry name" value="LARGE RIBOSOMAL SUBUNIT PROTEIN UL6M"/>
    <property type="match status" value="1"/>
</dbReference>
<dbReference type="Pfam" id="PF00347">
    <property type="entry name" value="Ribosomal_L6"/>
    <property type="match status" value="2"/>
</dbReference>
<dbReference type="PIRSF" id="PIRSF002162">
    <property type="entry name" value="Ribosomal_L6"/>
    <property type="match status" value="1"/>
</dbReference>
<dbReference type="PRINTS" id="PR00059">
    <property type="entry name" value="RIBOSOMALL6"/>
</dbReference>
<dbReference type="SUPFAM" id="SSF56053">
    <property type="entry name" value="Ribosomal protein L6"/>
    <property type="match status" value="2"/>
</dbReference>
<dbReference type="PROSITE" id="PS00525">
    <property type="entry name" value="RIBOSOMAL_L6_1"/>
    <property type="match status" value="1"/>
</dbReference>
<organism>
    <name type="scientific">Shigella boydii serotype 4 (strain Sb227)</name>
    <dbReference type="NCBI Taxonomy" id="300268"/>
    <lineage>
        <taxon>Bacteria</taxon>
        <taxon>Pseudomonadati</taxon>
        <taxon>Pseudomonadota</taxon>
        <taxon>Gammaproteobacteria</taxon>
        <taxon>Enterobacterales</taxon>
        <taxon>Enterobacteriaceae</taxon>
        <taxon>Shigella</taxon>
    </lineage>
</organism>
<sequence>MSRVAKAPVVVPAGVDVKINGQVITIKGKNGELTRTLNDAVEVKHADNTLTFGPRDGYADGWAQAGTARALLNSMVIGVTEGFTKKLQLVGVGYRAAVKGNVINLSLGFSHPVDHQLPAGITAECPTQTEIVLKGADKQVIGQVAADLRAYRRPEPYKGKGVRYADEVVRTKEAKKK</sequence>
<name>RL6_SHIBS</name>
<proteinExistence type="inferred from homology"/>
<accession>Q31VX1</accession>
<reference key="1">
    <citation type="journal article" date="2005" name="Nucleic Acids Res.">
        <title>Genome dynamics and diversity of Shigella species, the etiologic agents of bacillary dysentery.</title>
        <authorList>
            <person name="Yang F."/>
            <person name="Yang J."/>
            <person name="Zhang X."/>
            <person name="Chen L."/>
            <person name="Jiang Y."/>
            <person name="Yan Y."/>
            <person name="Tang X."/>
            <person name="Wang J."/>
            <person name="Xiong Z."/>
            <person name="Dong J."/>
            <person name="Xue Y."/>
            <person name="Zhu Y."/>
            <person name="Xu X."/>
            <person name="Sun L."/>
            <person name="Chen S."/>
            <person name="Nie H."/>
            <person name="Peng J."/>
            <person name="Xu J."/>
            <person name="Wang Y."/>
            <person name="Yuan Z."/>
            <person name="Wen Y."/>
            <person name="Yao Z."/>
            <person name="Shen Y."/>
            <person name="Qiang B."/>
            <person name="Hou Y."/>
            <person name="Yu J."/>
            <person name="Jin Q."/>
        </authorList>
    </citation>
    <scope>NUCLEOTIDE SEQUENCE [LARGE SCALE GENOMIC DNA]</scope>
    <source>
        <strain>Sb227</strain>
    </source>
</reference>
<protein>
    <recommendedName>
        <fullName evidence="1">Large ribosomal subunit protein uL6</fullName>
    </recommendedName>
    <alternativeName>
        <fullName evidence="2">50S ribosomal protein L6</fullName>
    </alternativeName>
</protein>
<feature type="chain" id="PRO_0000265298" description="Large ribosomal subunit protein uL6">
    <location>
        <begin position="1"/>
        <end position="177"/>
    </location>
</feature>
<feature type="modified residue" description="N6-acetyllysine" evidence="1">
    <location>
        <position position="44"/>
    </location>
</feature>
<comment type="function">
    <text evidence="1">This protein binds to the 23S rRNA, and is important in its secondary structure. It is located near the subunit interface in the base of the L7/L12 stalk, and near the tRNA binding site of the peptidyltransferase center.</text>
</comment>
<comment type="subunit">
    <text evidence="1">Part of the 50S ribosomal subunit.</text>
</comment>
<comment type="similarity">
    <text evidence="1">Belongs to the universal ribosomal protein uL6 family.</text>
</comment>
<keyword id="KW-0007">Acetylation</keyword>
<keyword id="KW-0687">Ribonucleoprotein</keyword>
<keyword id="KW-0689">Ribosomal protein</keyword>
<keyword id="KW-0694">RNA-binding</keyword>
<keyword id="KW-0699">rRNA-binding</keyword>
<evidence type="ECO:0000255" key="1">
    <source>
        <dbReference type="HAMAP-Rule" id="MF_01365"/>
    </source>
</evidence>
<evidence type="ECO:0000305" key="2"/>
<gene>
    <name evidence="1" type="primary">rplF</name>
    <name type="ordered locus">SBO_3299</name>
</gene>